<comment type="function">
    <text evidence="1 3 4 5 7 8 10 11 12">Acts as a molecular scaffold that plays a key role in the organization of the endoplasmic reticulum exit sites (ERES), also known as transitional endoplasmic reticulum (tER). SAR1A-GTP-dependent assembly of SEC16A on the ER membrane forms an organized scaffold defining an ERES. Required for secretory cargo traffic from the endoplasmic reticulum to the Golgi apparatus (PubMed:17005010, PubMed:17192411, PubMed:17428803, PubMed:21768384, PubMed:22355596). Mediates the recruitment of MIA3/TANGO to ERES (PubMed:28442536). Regulates both conventional (ER/Golgi-dependent) and GORASP2-mediated unconventional (ER/Golgi-independent) trafficking of CFTR to cell membrane (PubMed:28067262). Positively regulates the protein stability of E3 ubiquitin-protein ligases RNF152 and RNF183 and the ER localization of RNF183 (PubMed:29300766). Acts as a RAB10 effector in the regulation of insulin-induced SLC2A4/GLUT4 glucose transporter-enriched vesicles delivery to the cell membrane in adipocytes (By similarity).</text>
</comment>
<comment type="subunit">
    <text evidence="1 4 5 6 8 9 10 11 12">SEC16A and SEC16B are each present in multiple copies in a heteromeric complex (PubMed:17192411, PubMed:22355596). Interacts with SEC23A (PubMed:17192411, PubMed:17428803). Interacts with RNF183 and RNF152 (PubMed:29300766). Interacts with LRRK2 (via ROC domain) (PubMed:25201882). Interacts with SEC13 (PubMed:17428803, PubMed:19638414, PubMed:25201882). Interacts with RAB10 (By similarity). Interacts with MIA3 (PubMed:28442536). Interacts with GORASP2 in response to ER stress (PubMed:28067262).</text>
</comment>
<comment type="interaction">
    <interactant intactId="EBI-357515">
        <id>O15027</id>
    </interactant>
    <interactant intactId="EBI-2433703">
        <id>Q96N67</id>
        <label>DOCK7</label>
    </interactant>
    <organismsDiffer>false</organismsDiffer>
    <experiments>3</experiments>
</comment>
<comment type="interaction">
    <interactant intactId="EBI-357515">
        <id>O15027</id>
    </interactant>
    <interactant intactId="EBI-5323863">
        <id>Q5S007</id>
        <label>LRRK2</label>
    </interactant>
    <organismsDiffer>false</organismsDiffer>
    <experiments>8</experiments>
</comment>
<comment type="interaction">
    <interactant intactId="EBI-357515">
        <id>O15027</id>
    </interactant>
    <interactant intactId="EBI-2862306">
        <id>Q6ZNJ1</id>
        <label>NBEAL2</label>
    </interactant>
    <organismsDiffer>false</organismsDiffer>
    <experiments>6</experiments>
</comment>
<comment type="subcellular location">
    <subcellularLocation>
        <location evidence="3 12">Endoplasmic reticulum membrane</location>
        <topology evidence="3">Peripheral membrane protein</topology>
    </subcellularLocation>
    <subcellularLocation>
        <location evidence="16">Golgi apparatus membrane</location>
        <topology evidence="16">Peripheral membrane protein</topology>
    </subcellularLocation>
    <subcellularLocation>
        <location evidence="1">Cytoplasm</location>
        <location evidence="1">Perinuclear region</location>
    </subcellularLocation>
    <subcellularLocation>
        <location evidence="5 7">Cytoplasm</location>
        <location evidence="5 7">Cytosol</location>
    </subcellularLocation>
    <subcellularLocation>
        <location evidence="5">Microsome membrane</location>
    </subcellularLocation>
    <text evidence="4 5 6 8 9 11">SAR1A activity is required to maintain SEC16A localization at discrete locations on the ER membrane perhaps by preventing its dissociation (PubMed:17192411). Localizes to endoplasmic reticulum exit sites (ERES), also known as transitional endoplasmic reticulum (tER). MIA3 and LRRK2 are required for its proper localization to ERES (PubMed:17428803, PubMed:19638414, PubMed:22355596, PubMed:25201882, PubMed:28442536). Recruited to microsomal membrane in SAR1-dependent manner (PubMed:17428803).</text>
</comment>
<comment type="alternative products">
    <event type="alternative splicing"/>
    <isoform>
        <id>O15027-1</id>
        <name>1</name>
        <sequence type="displayed"/>
    </isoform>
    <isoform>
        <id>O15027-2</id>
        <name>2</name>
        <sequence type="described" ref="VSP_015252"/>
    </isoform>
    <isoform>
        <id>O15027-3</id>
        <name>3</name>
        <sequence type="described" ref="VSP_015253"/>
    </isoform>
    <isoform>
        <id>O15027-4</id>
        <name>4</name>
        <sequence type="described" ref="VSP_034370"/>
    </isoform>
    <isoform>
        <id>O15027-5</id>
        <name>5</name>
        <sequence type="described" ref="VSP_036029"/>
    </isoform>
</comment>
<comment type="tissue specificity">
    <text evidence="4">Ubiquitous. Expressed at higher levels in the pancreas.</text>
</comment>
<comment type="similarity">
    <text evidence="16">Belongs to the SEC16 family.</text>
</comment>
<comment type="sequence caution" evidence="16">
    <conflict type="erroneous initiation">
        <sequence resource="EMBL-CDS" id="BAA20769"/>
    </conflict>
    <text>Extended N-terminus.</text>
</comment>
<organism>
    <name type="scientific">Homo sapiens</name>
    <name type="common">Human</name>
    <dbReference type="NCBI Taxonomy" id="9606"/>
    <lineage>
        <taxon>Eukaryota</taxon>
        <taxon>Metazoa</taxon>
        <taxon>Chordata</taxon>
        <taxon>Craniata</taxon>
        <taxon>Vertebrata</taxon>
        <taxon>Euteleostomi</taxon>
        <taxon>Mammalia</taxon>
        <taxon>Eutheria</taxon>
        <taxon>Euarchontoglires</taxon>
        <taxon>Primates</taxon>
        <taxon>Haplorrhini</taxon>
        <taxon>Catarrhini</taxon>
        <taxon>Hominidae</taxon>
        <taxon>Homo</taxon>
    </lineage>
</organism>
<evidence type="ECO:0000250" key="1">
    <source>
        <dbReference type="UniProtKB" id="E9QAT4"/>
    </source>
</evidence>
<evidence type="ECO:0000256" key="2">
    <source>
        <dbReference type="SAM" id="MobiDB-lite"/>
    </source>
</evidence>
<evidence type="ECO:0000269" key="3">
    <source>
    </source>
</evidence>
<evidence type="ECO:0000269" key="4">
    <source>
    </source>
</evidence>
<evidence type="ECO:0000269" key="5">
    <source>
    </source>
</evidence>
<evidence type="ECO:0000269" key="6">
    <source>
    </source>
</evidence>
<evidence type="ECO:0000269" key="7">
    <source>
    </source>
</evidence>
<evidence type="ECO:0000269" key="8">
    <source>
    </source>
</evidence>
<evidence type="ECO:0000269" key="9">
    <source>
    </source>
</evidence>
<evidence type="ECO:0000269" key="10">
    <source>
    </source>
</evidence>
<evidence type="ECO:0000269" key="11">
    <source>
    </source>
</evidence>
<evidence type="ECO:0000269" key="12">
    <source>
    </source>
</evidence>
<evidence type="ECO:0000303" key="13">
    <source>
    </source>
</evidence>
<evidence type="ECO:0000303" key="14">
    <source>
    </source>
</evidence>
<evidence type="ECO:0000303" key="15">
    <source>
    </source>
</evidence>
<evidence type="ECO:0000305" key="16"/>
<evidence type="ECO:0007744" key="17">
    <source>
    </source>
</evidence>
<evidence type="ECO:0007744" key="18">
    <source>
    </source>
</evidence>
<evidence type="ECO:0007744" key="19">
    <source>
    </source>
</evidence>
<evidence type="ECO:0007744" key="20">
    <source>
    </source>
</evidence>
<evidence type="ECO:0007744" key="21">
    <source>
    </source>
</evidence>
<evidence type="ECO:0007744" key="22">
    <source>
    </source>
</evidence>
<evidence type="ECO:0007744" key="23">
    <source>
    </source>
</evidence>
<evidence type="ECO:0007744" key="24">
    <source>
    </source>
</evidence>
<evidence type="ECO:0007744" key="25">
    <source>
    </source>
</evidence>
<evidence type="ECO:0007744" key="26">
    <source>
    </source>
</evidence>
<evidence type="ECO:0007744" key="27">
    <source>
    </source>
</evidence>
<protein>
    <recommendedName>
        <fullName>Protein transport protein Sec16A</fullName>
    </recommendedName>
    <alternativeName>
        <fullName>SEC16 homolog A</fullName>
        <shortName evidence="15">p250</shortName>
    </alternativeName>
</protein>
<gene>
    <name type="primary">SEC16A</name>
    <name type="synonym">KIAA0310</name>
    <name type="synonym">SEC16</name>
    <name type="synonym">SEC16L</name>
</gene>
<accession>O15027</accession>
<accession>A1YCA4</accession>
<accession>J3KNL6</accession>
<accession>Q4G0D7</accession>
<accession>Q5SXP0</accession>
<accession>Q5SXP1</accession>
<accession>Q8N347</accession>
<accession>Q96HP1</accession>
<name>SC16A_HUMAN</name>
<sequence>MQPPPQTVPSGMAGPPPAGNPRSVFWASSPYRRRANNNAAVAPTTCPLQPVTDPFAFSRQALQSTPLGSSSKSSPPVLQGPAPAGFSQHPGLLVPHTHARDSSQGPCEPLPGPLTQPRAHASPFSGALTPSAPPGPEMNRSAEVGPSSEPEVQTLPYLPHYIPGVDPETSHGGHPHGNMPGLDRPLSRQNPHDGVVTPAASPSLPQPGLQMPGQWGPVQGGPQPSGQHRSPCPEGPVPSGVPCATSVPHFPTPSILHQGPGHEQHSPLVAPPAALPSDGRDEVSHLQSGSHLANNSDPESTFRQNPRIVNHWASPELRQNPGVKNEHRPASALVNPLARGDSPENRTHHPLGAGAGSGCAPLEADSGASGALAMFFQGGETENEENLSSEKAGLSGQADFDDFCSSPGLGRPPAPTHVGAGSLCQALLPGPSNEAAGDVWGDTASTGVPDASGSQYENVENLEFVQNQEVLPSEPLNLDPSSPSDQFRYGPLPGPAVPRHGAVCHTGAPDATLHTVHPDSVSSSYSSRSHGRLSGSARPQELVGTFIQQEVGKPEDEASGSFFKQIDSSPVGGETDETTVSQNYRGSVSQPSTPSPPKPTGIFQTSANSSFEPVKSHLVGVKPFEADRANVVGEVRETCVRQKQCRPAAALPDASPGNLEQPPDNMETLCAPQVCPLPLNSTTEAVHMLPHAGAPPLDTVYPAPEKRPSARTQGPVKCESPATTLWAQSELPDFGGNVLLAPAAPALYVCAKPQPPVVQPPEEAMSGQQSRNPSSAAPVQSRGGIGASENLENPPKMGEEEALQSQASSGYASLLSSPPTESLQNPPVLIAQPDHSYNLAQPINFSVSLSNSHEKNQSWREALVGDRPAVSSWALGGDSGENTSLSGIPTSSVLSLSLPSSVAQSNFPQGSGASEMVSNQPANLLVQPPSQPVPENLVPESQKDRKAGSALPGFANSPAGSTSVVLVPPAHGTLVPDGNKANHSSHQEDTYGALDFTLSRTLENPVNVYNPSHSDSLASQQSVASHPRQSGPGAPNLDRFYQQVTKDAQGQPGLERAQQELVPPQQQASPPQLPKAMFSELSNPESLPAQGQAQNSAQSPASLVLVDAGQQLPPRPPQSSSVSLVSSGSGQAAVPSEQPWPQPVPALAPGPPPQDLAAYYYYRPLYDAYQPQYSLPYPPEPGAASLYYQDVYSLYEPRYRPYDGAASAYAQNYRYPEPERPSSRASHSSERPPPRQGYPEGYYSSKSGWSSQSDYYASYYSSQYDYGDPGHWDRYHYSARVRDPRTYDRRYWCDAEYDAYRREHSAFGDRPEKRDNNWRYDPRFTGSFDDDPDPHRDPYGEEVDRRSVHSEHSARSLHSAHSLASRRSSLSSHSHQSQIYRSHNVAAGSYEAPLPPGSFHGDFAYGTYRSNFSSGPGFPEYGYPADTVWPAMEQVSSRPTSPEKFSVPHVCARFGPGGQLIKVIPNLPSEGQPALVEVHSMEALLQHTSEQEEMRAFPGPLAKDDTHKVDVINFAQNKAMKCLQNENLIDKESASLLWNFIVLLCRQNGTVVGTDIAELLLRDHRTVWLPGKSPNEANLIDFTNEAVEQVEEEESGEAQLSFLTGGPAAAASSLERETERFRELLLYGRKKDALESAMKNGLWGHALLLASKMDSRTHARVMTRFANSLPINDPLQTVYQLMSGRMPAASTCCGDEKWGDWRPHLAMVLSNLNNNMDVESRTMATMGDTLASRGLLDAAHFCYLMAQAGFGVYTKKTTKLVLIGSNHSLPFLKFATNEAIQRTEAYEYAQSLGAETCPLPSFQVFKFIYSCRLAEMGLATQAFHYCEAIAKSILTQPHLYSPVLISQLVQMASQLRLFDPQLKEKPEEESLAAPTWLVHLQQVERQIKEGAGVWHQDGALPQQCPGTPSSEMEQLDRPGLSQPGALGIANPLLAVPAPSPEHSSPSVRLLPSAPQTLPDGPLASPARVPMFPVPLPPGPLEPGPGCVTPGPALGFLEPSGPGLPPGVPPLQERRHLLQEARSPDPGIVPQEAPVGNSLSELSEENFDGKFANLTPSRTVPDSEAPPGWDRADSGPTQPPLSLSPAPETKRPGQAAKKETKEPKKGESWFFRWLPGKKKTEAYLPDDKNKSIVWDEKKNQWVNLNEPEEEKKAPPPPPTSMPKTVQAAPPALPGPPGAPVNMYSRRAAGTRARYVDVLNPSGTQRSEPALAPADFVAPLAPLPIPSNLFVPTPDAEEPQLPDGTGREGPAAARGLANPEPAPEPKVLSSAASLPGSELPSSRPEGSQGGELSRCSSMSSLSREVSQHFNQAPGDLPAAGGPPSGAMPFYNPAQLAQACATSGSSRLGRIGQRKHLVLN</sequence>
<reference key="1">
    <citation type="journal article" date="1997" name="DNA Res.">
        <title>Prediction of the coding sequences of unidentified human genes. VII. The complete sequences of 100 new cDNA clones from brain which can code for large proteins in vitro.</title>
        <authorList>
            <person name="Nagase T."/>
            <person name="Ishikawa K."/>
            <person name="Nakajima D."/>
            <person name="Ohira M."/>
            <person name="Seki N."/>
            <person name="Miyajima N."/>
            <person name="Tanaka A."/>
            <person name="Kotani H."/>
            <person name="Nomura N."/>
            <person name="Ohara O."/>
        </authorList>
    </citation>
    <scope>NUCLEOTIDE SEQUENCE [LARGE SCALE MRNA] (ISOFORM 1)</scope>
    <source>
        <tissue>Brain</tissue>
    </source>
</reference>
<reference key="2">
    <citation type="journal article" date="2002" name="DNA Res.">
        <title>Construction of expression-ready cDNA clones for KIAA genes: manual curation of 330 KIAA cDNA clones.</title>
        <authorList>
            <person name="Nakajima D."/>
            <person name="Okazaki N."/>
            <person name="Yamakawa H."/>
            <person name="Kikuno R."/>
            <person name="Ohara O."/>
            <person name="Nagase T."/>
        </authorList>
    </citation>
    <scope>SEQUENCE REVISION</scope>
</reference>
<reference key="3">
    <citation type="submission" date="2005-08" db="EMBL/GenBank/DDBJ databases">
        <authorList>
            <person name="Ohara O."/>
            <person name="Nagase T."/>
            <person name="Kikuno R."/>
            <person name="Nomura N."/>
        </authorList>
    </citation>
    <scope>SEQUENCE REVISION</scope>
</reference>
<reference key="4">
    <citation type="journal article" date="2004" name="Nature">
        <title>DNA sequence and analysis of human chromosome 9.</title>
        <authorList>
            <person name="Humphray S.J."/>
            <person name="Oliver K."/>
            <person name="Hunt A.R."/>
            <person name="Plumb R.W."/>
            <person name="Loveland J.E."/>
            <person name="Howe K.L."/>
            <person name="Andrews T.D."/>
            <person name="Searle S."/>
            <person name="Hunt S.E."/>
            <person name="Scott C.E."/>
            <person name="Jones M.C."/>
            <person name="Ainscough R."/>
            <person name="Almeida J.P."/>
            <person name="Ambrose K.D."/>
            <person name="Ashwell R.I.S."/>
            <person name="Babbage A.K."/>
            <person name="Babbage S."/>
            <person name="Bagguley C.L."/>
            <person name="Bailey J."/>
            <person name="Banerjee R."/>
            <person name="Barker D.J."/>
            <person name="Barlow K.F."/>
            <person name="Bates K."/>
            <person name="Beasley H."/>
            <person name="Beasley O."/>
            <person name="Bird C.P."/>
            <person name="Bray-Allen S."/>
            <person name="Brown A.J."/>
            <person name="Brown J.Y."/>
            <person name="Burford D."/>
            <person name="Burrill W."/>
            <person name="Burton J."/>
            <person name="Carder C."/>
            <person name="Carter N.P."/>
            <person name="Chapman J.C."/>
            <person name="Chen Y."/>
            <person name="Clarke G."/>
            <person name="Clark S.Y."/>
            <person name="Clee C.M."/>
            <person name="Clegg S."/>
            <person name="Collier R.E."/>
            <person name="Corby N."/>
            <person name="Crosier M."/>
            <person name="Cummings A.T."/>
            <person name="Davies J."/>
            <person name="Dhami P."/>
            <person name="Dunn M."/>
            <person name="Dutta I."/>
            <person name="Dyer L.W."/>
            <person name="Earthrowl M.E."/>
            <person name="Faulkner L."/>
            <person name="Fleming C.J."/>
            <person name="Frankish A."/>
            <person name="Frankland J.A."/>
            <person name="French L."/>
            <person name="Fricker D.G."/>
            <person name="Garner P."/>
            <person name="Garnett J."/>
            <person name="Ghori J."/>
            <person name="Gilbert J.G.R."/>
            <person name="Glison C."/>
            <person name="Grafham D.V."/>
            <person name="Gribble S."/>
            <person name="Griffiths C."/>
            <person name="Griffiths-Jones S."/>
            <person name="Grocock R."/>
            <person name="Guy J."/>
            <person name="Hall R.E."/>
            <person name="Hammond S."/>
            <person name="Harley J.L."/>
            <person name="Harrison E.S.I."/>
            <person name="Hart E.A."/>
            <person name="Heath P.D."/>
            <person name="Henderson C.D."/>
            <person name="Hopkins B.L."/>
            <person name="Howard P.J."/>
            <person name="Howden P.J."/>
            <person name="Huckle E."/>
            <person name="Johnson C."/>
            <person name="Johnson D."/>
            <person name="Joy A.A."/>
            <person name="Kay M."/>
            <person name="Keenan S."/>
            <person name="Kershaw J.K."/>
            <person name="Kimberley A.M."/>
            <person name="King A."/>
            <person name="Knights A."/>
            <person name="Laird G.K."/>
            <person name="Langford C."/>
            <person name="Lawlor S."/>
            <person name="Leongamornlert D.A."/>
            <person name="Leversha M."/>
            <person name="Lloyd C."/>
            <person name="Lloyd D.M."/>
            <person name="Lovell J."/>
            <person name="Martin S."/>
            <person name="Mashreghi-Mohammadi M."/>
            <person name="Matthews L."/>
            <person name="McLaren S."/>
            <person name="McLay K.E."/>
            <person name="McMurray A."/>
            <person name="Milne S."/>
            <person name="Nickerson T."/>
            <person name="Nisbett J."/>
            <person name="Nordsiek G."/>
            <person name="Pearce A.V."/>
            <person name="Peck A.I."/>
            <person name="Porter K.M."/>
            <person name="Pandian R."/>
            <person name="Pelan S."/>
            <person name="Phillimore B."/>
            <person name="Povey S."/>
            <person name="Ramsey Y."/>
            <person name="Rand V."/>
            <person name="Scharfe M."/>
            <person name="Sehra H.K."/>
            <person name="Shownkeen R."/>
            <person name="Sims S.K."/>
            <person name="Skuce C.D."/>
            <person name="Smith M."/>
            <person name="Steward C.A."/>
            <person name="Swarbreck D."/>
            <person name="Sycamore N."/>
            <person name="Tester J."/>
            <person name="Thorpe A."/>
            <person name="Tracey A."/>
            <person name="Tromans A."/>
            <person name="Thomas D.W."/>
            <person name="Wall M."/>
            <person name="Wallis J.M."/>
            <person name="West A.P."/>
            <person name="Whitehead S.L."/>
            <person name="Willey D.L."/>
            <person name="Williams S.A."/>
            <person name="Wilming L."/>
            <person name="Wray P.W."/>
            <person name="Young L."/>
            <person name="Ashurst J.L."/>
            <person name="Coulson A."/>
            <person name="Blocker H."/>
            <person name="Durbin R.M."/>
            <person name="Sulston J.E."/>
            <person name="Hubbard T."/>
            <person name="Jackson M.J."/>
            <person name="Bentley D.R."/>
            <person name="Beck S."/>
            <person name="Rogers J."/>
            <person name="Dunham I."/>
        </authorList>
    </citation>
    <scope>NUCLEOTIDE SEQUENCE [LARGE SCALE GENOMIC DNA]</scope>
</reference>
<reference key="5">
    <citation type="journal article" date="2007" name="Mol. Biol. Cell">
        <title>Two mammalian Sec16 homologues have nonredundant functions in endoplasmic reticulum (ER) export and transitional ER organization.</title>
        <authorList>
            <person name="Bhattacharyya D."/>
            <person name="Glick B.S."/>
        </authorList>
    </citation>
    <scope>NUCLEOTIDE SEQUENCE [MRNA] OF 179-2357 (ISOFORM 4)</scope>
    <scope>FUNCTION</scope>
    <scope>SUBUNIT</scope>
    <scope>SUBCELLULAR LOCATION</scope>
    <scope>TISSUE SPECIFICITY</scope>
    <scope>INTERACTION WITH SEC23A</scope>
    <source>
        <tissue>Liver</tissue>
    </source>
</reference>
<reference key="6">
    <citation type="journal article" date="2004" name="Genome Res.">
        <title>The status, quality, and expansion of the NIH full-length cDNA project: the Mammalian Gene Collection (MGC).</title>
        <authorList>
            <consortium name="The MGC Project Team"/>
        </authorList>
    </citation>
    <scope>NUCLEOTIDE SEQUENCE [LARGE SCALE MRNA] OF 1607-2357 (ISOFORM 1)</scope>
    <scope>NUCLEOTIDE SEQUENCE [LARGE SCALE MRNA] OF 1276-2357 (ISOFORM 3)</scope>
    <scope>NUCLEOTIDE SEQUENCE [LARGE SCALE MRNA] OF 1844-2357 (ISOFORM 5)</scope>
    <source>
        <tissue>Lung</tissue>
        <tissue>Placenta</tissue>
        <tissue>Testis</tissue>
    </source>
</reference>
<reference key="7">
    <citation type="journal article" date="2006" name="Cell">
        <title>Global, in vivo, and site-specific phosphorylation dynamics in signaling networks.</title>
        <authorList>
            <person name="Olsen J.V."/>
            <person name="Blagoev B."/>
            <person name="Gnad F."/>
            <person name="Macek B."/>
            <person name="Kumar C."/>
            <person name="Mortensen P."/>
            <person name="Mann M."/>
        </authorList>
    </citation>
    <scope>PHOSPHORYLATION [LARGE SCALE ANALYSIS] AT SER-314 AND SER-1964</scope>
    <scope>IDENTIFICATION BY MASS SPECTROMETRY [LARGE SCALE ANALYSIS]</scope>
    <source>
        <tissue>Cervix carcinoma</tissue>
    </source>
</reference>
<reference key="8">
    <citation type="journal article" date="2006" name="Nat. Biotechnol.">
        <title>A probability-based approach for high-throughput protein phosphorylation analysis and site localization.</title>
        <authorList>
            <person name="Beausoleil S.A."/>
            <person name="Villen J."/>
            <person name="Gerber S.A."/>
            <person name="Rush J."/>
            <person name="Gygi S.P."/>
        </authorList>
    </citation>
    <scope>PHOSPHORYLATION [LARGE SCALE ANALYSIS] AT SER-1964; SER-2022 AND SER-2083</scope>
    <scope>IDENTIFICATION BY MASS SPECTROMETRY [LARGE SCALE ANALYSIS]</scope>
    <source>
        <tissue>Cervix carcinoma</tissue>
    </source>
</reference>
<reference key="9">
    <citation type="journal article" date="2006" name="Traffic">
        <title>Sec16 defines endoplasmic reticulum exit sites and is required for secretory cargo export in mammalian cells.</title>
        <authorList>
            <person name="Watson P."/>
            <person name="Townley A.K."/>
            <person name="Koka P."/>
            <person name="Palmer K.J."/>
            <person name="Stephens D.J."/>
        </authorList>
    </citation>
    <scope>FUNCTION</scope>
    <scope>SUBCELLULAR LOCATION</scope>
</reference>
<reference key="10">
    <citation type="journal article" date="2007" name="J. Biol. Chem.">
        <title>Mammalian Sec16/p250 plays a role in membrane traffic from the endoplasmic reticulum.</title>
        <authorList>
            <person name="Iinuma T."/>
            <person name="Shiga A."/>
            <person name="Nakamoto K."/>
            <person name="O'Brien M.B."/>
            <person name="Aridor M."/>
            <person name="Arimitsu N."/>
            <person name="Tagaya M."/>
            <person name="Tani K."/>
        </authorList>
    </citation>
    <scope>FUNCTION</scope>
    <scope>SUBCELLULAR LOCATION</scope>
    <scope>INTERACTION WITH SEC23A AND SEC13</scope>
</reference>
<reference key="11">
    <citation type="journal article" date="2007" name="J. Proteome Res.">
        <title>Improved titanium dioxide enrichment of phosphopeptides from HeLa cells and high confident phosphopeptide identification by cross-validation of MS/MS and MS/MS/MS spectra.</title>
        <authorList>
            <person name="Yu L.R."/>
            <person name="Zhu Z."/>
            <person name="Chan K.C."/>
            <person name="Issaq H.J."/>
            <person name="Dimitrov D.S."/>
            <person name="Veenstra T.D."/>
        </authorList>
    </citation>
    <scope>PHOSPHORYLATION [LARGE SCALE ANALYSIS] AT SER-314 AND SER-1964</scope>
    <scope>IDENTIFICATION BY MASS SPECTROMETRY [LARGE SCALE ANALYSIS]</scope>
    <source>
        <tissue>Cervix carcinoma</tissue>
    </source>
</reference>
<reference key="12">
    <citation type="journal article" date="2008" name="Mol. Cell">
        <title>Kinase-selective enrichment enables quantitative phosphoproteomics of the kinome across the cell cycle.</title>
        <authorList>
            <person name="Daub H."/>
            <person name="Olsen J.V."/>
            <person name="Bairlein M."/>
            <person name="Gnad F."/>
            <person name="Oppermann F.S."/>
            <person name="Korner R."/>
            <person name="Greff Z."/>
            <person name="Keri G."/>
            <person name="Stemmann O."/>
            <person name="Mann M."/>
        </authorList>
    </citation>
    <scope>PHOSPHORYLATION [LARGE SCALE ANALYSIS] AT SER-1964 AND SER-2022</scope>
    <scope>IDENTIFICATION BY MASS SPECTROMETRY [LARGE SCALE ANALYSIS]</scope>
    <source>
        <tissue>Cervix carcinoma</tissue>
    </source>
</reference>
<reference key="13">
    <citation type="journal article" date="2008" name="Proc. Natl. Acad. Sci. U.S.A.">
        <title>A quantitative atlas of mitotic phosphorylation.</title>
        <authorList>
            <person name="Dephoure N."/>
            <person name="Zhou C."/>
            <person name="Villen J."/>
            <person name="Beausoleil S.A."/>
            <person name="Bakalarski C.E."/>
            <person name="Elledge S.J."/>
            <person name="Gygi S.P."/>
        </authorList>
    </citation>
    <scope>PHOSPHORYLATION [LARGE SCALE ANALYSIS] AT SER-569; SER-589; SER-592; THR-593; SER-595; SER-1327; SER-1964; SER-2022; THR-2054 AND SER-2083</scope>
    <scope>IDENTIFICATION BY MASS SPECTROMETRY [LARGE SCALE ANALYSIS]</scope>
    <source>
        <tissue>Cervix carcinoma</tissue>
    </source>
</reference>
<reference key="14">
    <citation type="journal article" date="2008" name="Proteomics">
        <title>Large-scale phosphoproteome analysis of human liver tissue by enrichment and fractionation of phosphopeptides with strong anion exchange chromatography.</title>
        <authorList>
            <person name="Han G."/>
            <person name="Ye M."/>
            <person name="Zhou H."/>
            <person name="Jiang X."/>
            <person name="Feng S."/>
            <person name="Jiang X."/>
            <person name="Tian R."/>
            <person name="Wan D."/>
            <person name="Zou H."/>
            <person name="Gu J."/>
        </authorList>
    </citation>
    <scope>IDENTIFICATION BY MASS SPECTROMETRY [LARGE SCALE ANALYSIS]</scope>
    <source>
        <tissue>Liver</tissue>
    </source>
</reference>
<reference key="15">
    <citation type="journal article" date="2009" name="Anal. Chem.">
        <title>Lys-N and trypsin cover complementary parts of the phosphoproteome in a refined SCX-based approach.</title>
        <authorList>
            <person name="Gauci S."/>
            <person name="Helbig A.O."/>
            <person name="Slijper M."/>
            <person name="Krijgsveld J."/>
            <person name="Heck A.J."/>
            <person name="Mohammed S."/>
        </authorList>
    </citation>
    <scope>IDENTIFICATION BY MASS SPECTROMETRY [LARGE SCALE ANALYSIS]</scope>
</reference>
<reference key="16">
    <citation type="journal article" date="2009" name="J. Cell Sci.">
        <title>Organisation of human ER-exit sites: requirements for the localisation of Sec16 to transitional ER.</title>
        <authorList>
            <person name="Hughes H."/>
            <person name="Budnik A."/>
            <person name="Schmidt K."/>
            <person name="Palmer K.J."/>
            <person name="Mantell J."/>
            <person name="Noakes C."/>
            <person name="Johnson A."/>
            <person name="Carter D.A."/>
            <person name="Verkade P."/>
            <person name="Watson P."/>
            <person name="Stephens D.J."/>
        </authorList>
    </citation>
    <scope>SUBCELLULAR LOCATION</scope>
    <scope>INTERACTION WITH SEC13</scope>
</reference>
<reference key="17">
    <citation type="journal article" date="2009" name="Mol. Cell. Proteomics">
        <title>Large-scale proteomics analysis of the human kinome.</title>
        <authorList>
            <person name="Oppermann F.S."/>
            <person name="Gnad F."/>
            <person name="Olsen J.V."/>
            <person name="Hornberger R."/>
            <person name="Greff Z."/>
            <person name="Keri G."/>
            <person name="Mann M."/>
            <person name="Daub H."/>
        </authorList>
    </citation>
    <scope>PHOSPHORYLATION [LARGE SCALE ANALYSIS] AT SER-1964</scope>
    <scope>IDENTIFICATION BY MASS SPECTROMETRY [LARGE SCALE ANALYSIS]</scope>
</reference>
<reference key="18">
    <citation type="journal article" date="2009" name="Sci. Signal.">
        <title>Quantitative phosphoproteomic analysis of T cell receptor signaling reveals system-wide modulation of protein-protein interactions.</title>
        <authorList>
            <person name="Mayya V."/>
            <person name="Lundgren D.H."/>
            <person name="Hwang S.-I."/>
            <person name="Rezaul K."/>
            <person name="Wu L."/>
            <person name="Eng J.K."/>
            <person name="Rodionov V."/>
            <person name="Han D.K."/>
        </authorList>
    </citation>
    <scope>PHOSPHORYLATION [LARGE SCALE ANALYSIS] AT SER-1964; SER-2022; SER-2042 AND SER-2083</scope>
    <scope>IDENTIFICATION BY MASS SPECTROMETRY [LARGE SCALE ANALYSIS]</scope>
    <source>
        <tissue>Leukemic T-cell</tissue>
    </source>
</reference>
<reference key="19">
    <citation type="journal article" date="2010" name="Sci. Signal.">
        <title>Quantitative phosphoproteomics reveals widespread full phosphorylation site occupancy during mitosis.</title>
        <authorList>
            <person name="Olsen J.V."/>
            <person name="Vermeulen M."/>
            <person name="Santamaria A."/>
            <person name="Kumar C."/>
            <person name="Miller M.L."/>
            <person name="Jensen L.J."/>
            <person name="Gnad F."/>
            <person name="Cox J."/>
            <person name="Jensen T.S."/>
            <person name="Nigg E.A."/>
            <person name="Brunak S."/>
            <person name="Mann M."/>
        </authorList>
    </citation>
    <scope>PHOSPHORYLATION [LARGE SCALE ANALYSIS] AT SER-314; SER-1069; SER-1356; SER-1964; SER-2022; THR-2054; SER-2073 AND SER-2083</scope>
    <scope>IDENTIFICATION BY MASS SPECTROMETRY [LARGE SCALE ANALYSIS]</scope>
    <source>
        <tissue>Cervix carcinoma</tissue>
    </source>
</reference>
<reference key="20">
    <citation type="journal article" date="2011" name="BMC Syst. Biol.">
        <title>Initial characterization of the human central proteome.</title>
        <authorList>
            <person name="Burkard T.R."/>
            <person name="Planyavsky M."/>
            <person name="Kaupe I."/>
            <person name="Breitwieser F.P."/>
            <person name="Buerckstuemmer T."/>
            <person name="Bennett K.L."/>
            <person name="Superti-Furga G."/>
            <person name="Colinge J."/>
        </authorList>
    </citation>
    <scope>IDENTIFICATION BY MASS SPECTROMETRY [LARGE SCALE ANALYSIS]</scope>
</reference>
<reference key="21">
    <citation type="journal article" date="2011" name="Proc. Natl. Acad. Sci. U.S.A.">
        <title>Sec16B is involved in the endoplasmic reticulum export of the peroxisomal membrane biogenesis factor peroxin 16 (Pex16) in mammalian cells.</title>
        <authorList>
            <person name="Yonekawa S."/>
            <person name="Furuno A."/>
            <person name="Baba T."/>
            <person name="Fujiki Y."/>
            <person name="Ogasawara Y."/>
            <person name="Yamamoto A."/>
            <person name="Tagaya M."/>
            <person name="Tani K."/>
        </authorList>
    </citation>
    <scope>FUNCTION</scope>
    <scope>SUBCELLULAR LOCATION</scope>
</reference>
<reference key="22">
    <citation type="journal article" date="2011" name="Sci. Rep.">
        <title>Characterization of human Sec16B: indications of specialized, non-redundant functions.</title>
        <authorList>
            <person name="Budnik A."/>
            <person name="Heesom K.J."/>
            <person name="Stephens D.J."/>
        </authorList>
    </citation>
    <scope>FUNCTION</scope>
    <scope>SUBCELLULAR LOCATION</scope>
    <scope>INTERACTION WITH SEC16B</scope>
</reference>
<reference key="23">
    <citation type="journal article" date="2011" name="Sci. Signal.">
        <title>System-wide temporal characterization of the proteome and phosphoproteome of human embryonic stem cell differentiation.</title>
        <authorList>
            <person name="Rigbolt K.T."/>
            <person name="Prokhorova T.A."/>
            <person name="Akimov V."/>
            <person name="Henningsen J."/>
            <person name="Johansen P.T."/>
            <person name="Kratchmarova I."/>
            <person name="Kassem M."/>
            <person name="Mann M."/>
            <person name="Olsen J.V."/>
            <person name="Blagoev B."/>
        </authorList>
    </citation>
    <scope>PHOSPHORYLATION [LARGE SCALE ANALYSIS] AT SER-1356; SER-1359 AND SER-1362</scope>
    <scope>IDENTIFICATION BY MASS SPECTROMETRY [LARGE SCALE ANALYSIS]</scope>
</reference>
<reference key="24">
    <citation type="journal article" date="2013" name="J. Proteome Res.">
        <title>Toward a comprehensive characterization of a human cancer cell phosphoproteome.</title>
        <authorList>
            <person name="Zhou H."/>
            <person name="Di Palma S."/>
            <person name="Preisinger C."/>
            <person name="Peng M."/>
            <person name="Polat A.N."/>
            <person name="Heck A.J."/>
            <person name="Mohammed S."/>
        </authorList>
    </citation>
    <scope>PHOSPHORYLATION [LARGE SCALE ANALYSIS] AT SER-314; SER-331; SER-587; SER-595; SER-1069; SER-1207; SER-1229; SER-1305; SER-1327; SER-1356; SER-1369; SER-1964; THR-2054; SER-2056; SER-2073; SER-2083; SER-2271 AND SER-2291</scope>
    <scope>IDENTIFICATION BY MASS SPECTROMETRY [LARGE SCALE ANALYSIS]</scope>
    <source>
        <tissue>Cervix carcinoma</tissue>
        <tissue>Erythroleukemia</tissue>
    </source>
</reference>
<reference key="25">
    <citation type="journal article" date="2014" name="J. Proteomics">
        <title>An enzyme assisted RP-RPLC approach for in-depth analysis of human liver phosphoproteome.</title>
        <authorList>
            <person name="Bian Y."/>
            <person name="Song C."/>
            <person name="Cheng K."/>
            <person name="Dong M."/>
            <person name="Wang F."/>
            <person name="Huang J."/>
            <person name="Sun D."/>
            <person name="Wang L."/>
            <person name="Ye M."/>
            <person name="Zou H."/>
        </authorList>
    </citation>
    <scope>PHOSPHORYLATION [LARGE SCALE ANALYSIS] AT SER-296; SER-559; SER-595; SER-1069; THR-1325; SER-1347; SER-1350; SER-1356; SER-1359; SER-1573; SER-1601; THR-1907; SER-1939; SER-1964; THR-2054; SER-2083 AND SER-2271</scope>
    <scope>IDENTIFICATION BY MASS SPECTROMETRY [LARGE SCALE ANALYSIS]</scope>
    <source>
        <tissue>Liver</tissue>
    </source>
</reference>
<reference key="26">
    <citation type="journal article" date="2014" name="EMBO J.">
        <title>Leucine-rich repeat kinase 2 regulates Sec16A at ER exit sites to allow ER-Golgi export.</title>
        <authorList>
            <person name="Cho H.J."/>
            <person name="Yu J."/>
            <person name="Xie C."/>
            <person name="Rudrabhatla P."/>
            <person name="Chen X."/>
            <person name="Wu J."/>
            <person name="Parisiadou L."/>
            <person name="Liu G."/>
            <person name="Sun L."/>
            <person name="Ma B."/>
            <person name="Ding J."/>
            <person name="Liu Z."/>
            <person name="Cai H."/>
        </authorList>
    </citation>
    <scope>INTERACTION WITH LRRK2 AND SEC13</scope>
    <scope>DOMAIN CCD</scope>
    <scope>SUBCELLULAR LOCATION</scope>
</reference>
<reference key="27">
    <citation type="journal article" date="2017" name="J. Cell Biol.">
        <title>TANGO1 recruits Sec16 to coordinately organize ER exit sites for efficient secretion.</title>
        <authorList>
            <person name="Maeda M."/>
            <person name="Katada T."/>
            <person name="Saito K."/>
        </authorList>
    </citation>
    <scope>FUNCTION</scope>
    <scope>SUBCELLULAR LOCATION</scope>
    <scope>INTERACTION WITH MIA3</scope>
</reference>
<reference key="28">
    <citation type="journal article" date="2017" name="Sci. Rep.">
        <title>Sec16A is critical for both conventional and unconventional secretion of CFTR.</title>
        <authorList>
            <person name="Piao H."/>
            <person name="Kim J."/>
            <person name="Noh S.H."/>
            <person name="Kweon H.S."/>
            <person name="Kim J.Y."/>
            <person name="Lee M.G."/>
        </authorList>
    </citation>
    <scope>FUNCTION</scope>
    <scope>SUBCELLULAR LOCATION</scope>
    <scope>INTERACTION WITH GORASP2</scope>
</reference>
<reference key="29">
    <citation type="journal article" date="2018" name="PLoS ONE">
        <title>Sec16A, a key protein in COPII vesicle formation, regulates the stability and localization of the novel ubiquitin ligase RNF183.</title>
        <authorList>
            <person name="Wu Y."/>
            <person name="Guo X.P."/>
            <person name="Kanemoto S."/>
            <person name="Maeoka Y."/>
            <person name="Saito A."/>
            <person name="Asada R."/>
            <person name="Matsuhisa K."/>
            <person name="Ohtake Y."/>
            <person name="Imaizumi K."/>
            <person name="Kaneko M."/>
        </authorList>
    </citation>
    <scope>FUNCTION</scope>
    <scope>SUBCELLULAR LOCATION</scope>
    <scope>DOMAIN CCD</scope>
    <scope>INTERACTION WITH RNF183 AND RNF152</scope>
</reference>
<feature type="chain" id="PRO_0000050746" description="Protein transport protein Sec16A">
    <location>
        <begin position="1"/>
        <end position="2357"/>
    </location>
</feature>
<feature type="region of interest" description="Disordered" evidence="2">
    <location>
        <begin position="1"/>
        <end position="25"/>
    </location>
</feature>
<feature type="region of interest" description="Disordered" evidence="2">
    <location>
        <begin position="57"/>
        <end position="303"/>
    </location>
</feature>
<feature type="region of interest" description="Disordered" evidence="2">
    <location>
        <begin position="335"/>
        <end position="359"/>
    </location>
</feature>
<feature type="region of interest" description="Disordered" evidence="2">
    <location>
        <begin position="508"/>
        <end position="540"/>
    </location>
</feature>
<feature type="region of interest" description="Disordered" evidence="2">
    <location>
        <begin position="553"/>
        <end position="603"/>
    </location>
</feature>
<feature type="region of interest" description="Disordered" evidence="2">
    <location>
        <begin position="758"/>
        <end position="828"/>
    </location>
</feature>
<feature type="region of interest" description="Disordered" evidence="2">
    <location>
        <begin position="924"/>
        <end position="987"/>
    </location>
</feature>
<feature type="region of interest" description="Disordered" evidence="2">
    <location>
        <begin position="1006"/>
        <end position="1038"/>
    </location>
</feature>
<feature type="region of interest" description="Required for localization to endoplasmic reticulum exit sites" evidence="6">
    <location>
        <begin position="1019"/>
        <end position="1890"/>
    </location>
</feature>
<feature type="region of interest" description="Disordered" evidence="2">
    <location>
        <begin position="1059"/>
        <end position="1151"/>
    </location>
</feature>
<feature type="region of interest" description="Interaction with MIA3" evidence="11">
    <location>
        <begin position="1101"/>
        <end position="1400"/>
    </location>
</feature>
<feature type="region of interest" description="Required for endoplasmic reticulum localization" evidence="4">
    <location>
        <begin position="1102"/>
        <end position="1405"/>
    </location>
</feature>
<feature type="region of interest" description="Disordered" evidence="2">
    <location>
        <begin position="1215"/>
        <end position="1248"/>
    </location>
</feature>
<feature type="region of interest" description="Disordered" evidence="2">
    <location>
        <begin position="1307"/>
        <end position="1378"/>
    </location>
</feature>
<feature type="region of interest" description="Central conserved domain (CCD); mediates interaction with RNF183, LRRK2 and SEC13" evidence="6 9 12">
    <location>
        <begin position="1434"/>
        <end position="1890"/>
    </location>
</feature>
<feature type="region of interest" description="Disordered" evidence="2">
    <location>
        <begin position="2049"/>
        <end position="2110"/>
    </location>
</feature>
<feature type="region of interest" description="Required for interaction with SEC23A" evidence="4">
    <location>
        <begin position="2106"/>
        <end position="2357"/>
    </location>
</feature>
<feature type="region of interest" description="Disordered" evidence="2">
    <location>
        <begin position="2141"/>
        <end position="2181"/>
    </location>
</feature>
<feature type="region of interest" description="Disordered" evidence="2">
    <location>
        <begin position="2226"/>
        <end position="2328"/>
    </location>
</feature>
<feature type="compositionally biased region" description="Low complexity" evidence="2">
    <location>
        <begin position="64"/>
        <end position="76"/>
    </location>
</feature>
<feature type="compositionally biased region" description="Low complexity" evidence="2">
    <location>
        <begin position="210"/>
        <end position="227"/>
    </location>
</feature>
<feature type="compositionally biased region" description="Polar residues" evidence="2">
    <location>
        <begin position="285"/>
        <end position="303"/>
    </location>
</feature>
<feature type="compositionally biased region" description="Low complexity" evidence="2">
    <location>
        <begin position="520"/>
        <end position="536"/>
    </location>
</feature>
<feature type="compositionally biased region" description="Polar residues" evidence="2">
    <location>
        <begin position="766"/>
        <end position="778"/>
    </location>
</feature>
<feature type="compositionally biased region" description="Polar residues" evidence="2">
    <location>
        <begin position="803"/>
        <end position="825"/>
    </location>
</feature>
<feature type="compositionally biased region" description="Polar residues" evidence="2">
    <location>
        <begin position="1006"/>
        <end position="1028"/>
    </location>
</feature>
<feature type="compositionally biased region" description="Polar residues" evidence="2">
    <location>
        <begin position="1080"/>
        <end position="1101"/>
    </location>
</feature>
<feature type="compositionally biased region" description="Low complexity" evidence="2">
    <location>
        <begin position="1118"/>
        <end position="1131"/>
    </location>
</feature>
<feature type="compositionally biased region" description="Pro residues" evidence="2">
    <location>
        <begin position="1138"/>
        <end position="1151"/>
    </location>
</feature>
<feature type="compositionally biased region" description="Basic and acidic residues" evidence="2">
    <location>
        <begin position="1216"/>
        <end position="1233"/>
    </location>
</feature>
<feature type="compositionally biased region" description="Basic and acidic residues" evidence="2">
    <location>
        <begin position="1307"/>
        <end position="1322"/>
    </location>
</feature>
<feature type="compositionally biased region" description="Basic and acidic residues" evidence="2">
    <location>
        <begin position="1333"/>
        <end position="1354"/>
    </location>
</feature>
<feature type="compositionally biased region" description="Low complexity" evidence="2">
    <location>
        <begin position="1356"/>
        <end position="1375"/>
    </location>
</feature>
<feature type="compositionally biased region" description="Basic and acidic residues" evidence="2">
    <location>
        <begin position="2087"/>
        <end position="2106"/>
    </location>
</feature>
<feature type="compositionally biased region" description="Low complexity" evidence="2">
    <location>
        <begin position="2289"/>
        <end position="2302"/>
    </location>
</feature>
<feature type="compositionally biased region" description="Low complexity" evidence="2">
    <location>
        <begin position="2310"/>
        <end position="2324"/>
    </location>
</feature>
<feature type="modified residue" description="Phosphoserine" evidence="27">
    <location>
        <position position="296"/>
    </location>
</feature>
<feature type="modified residue" description="Phosphoserine" evidence="18 19 24 26">
    <location>
        <position position="314"/>
    </location>
</feature>
<feature type="modified residue" description="Phosphoserine" evidence="26">
    <location>
        <position position="331"/>
    </location>
</feature>
<feature type="modified residue" description="Phosphoserine" evidence="27">
    <location>
        <position position="559"/>
    </location>
</feature>
<feature type="modified residue" description="Phosphoserine" evidence="20">
    <location>
        <position position="569"/>
    </location>
</feature>
<feature type="modified residue" description="Phosphoserine" evidence="26">
    <location>
        <position position="587"/>
    </location>
</feature>
<feature type="modified residue" description="Phosphoserine" evidence="20">
    <location>
        <position position="589"/>
    </location>
</feature>
<feature type="modified residue" description="Phosphoserine" evidence="20">
    <location>
        <position position="592"/>
    </location>
</feature>
<feature type="modified residue" description="Phosphothreonine" evidence="20">
    <location>
        <position position="593"/>
    </location>
</feature>
<feature type="modified residue" description="Phosphoserine" evidence="20 26 27">
    <location>
        <position position="595"/>
    </location>
</feature>
<feature type="modified residue" description="Phosphoserine" evidence="24 26 27">
    <location>
        <position position="1069"/>
    </location>
</feature>
<feature type="modified residue" description="Phosphoserine" evidence="26">
    <location>
        <position position="1207"/>
    </location>
</feature>
<feature type="modified residue" description="Phosphoserine" evidence="26">
    <location>
        <position position="1229"/>
    </location>
</feature>
<feature type="modified residue" description="Phosphoserine" evidence="26">
    <location>
        <position position="1305"/>
    </location>
</feature>
<feature type="modified residue" description="Phosphothreonine" evidence="27">
    <location>
        <position position="1325"/>
    </location>
</feature>
<feature type="modified residue" description="Phosphoserine" evidence="20 26">
    <location>
        <position position="1327"/>
    </location>
</feature>
<feature type="modified residue" description="Phosphoserine" evidence="27">
    <location>
        <position position="1347"/>
    </location>
</feature>
<feature type="modified residue" description="Phosphoserine" evidence="27">
    <location>
        <position position="1350"/>
    </location>
</feature>
<feature type="modified residue" description="Phosphoserine" evidence="24 25 26 27">
    <location>
        <position position="1356"/>
    </location>
</feature>
<feature type="modified residue" description="Phosphoserine" evidence="25 27">
    <location>
        <position position="1359"/>
    </location>
</feature>
<feature type="modified residue" description="Phosphoserine" evidence="25">
    <location>
        <position position="1362"/>
    </location>
</feature>
<feature type="modified residue" description="Phosphoserine" evidence="26">
    <location>
        <position position="1369"/>
    </location>
</feature>
<feature type="modified residue" description="Phosphoserine" evidence="27">
    <location>
        <position position="1573"/>
    </location>
</feature>
<feature type="modified residue" description="Phosphoserine" evidence="27">
    <location>
        <position position="1601"/>
    </location>
</feature>
<feature type="modified residue" description="Phosphothreonine" evidence="27">
    <location>
        <position position="1907"/>
    </location>
</feature>
<feature type="modified residue" description="Phosphoserine" evidence="27">
    <location>
        <position position="1939"/>
    </location>
</feature>
<feature type="modified residue" description="Phosphoserine" evidence="17 18 19 20 21 22 23 24 26 27">
    <location>
        <position position="1964"/>
    </location>
</feature>
<feature type="modified residue" description="Phosphoserine" evidence="17 20 21 23 24">
    <location>
        <position position="2022"/>
    </location>
</feature>
<feature type="modified residue" description="Phosphoserine" evidence="23">
    <location>
        <position position="2042"/>
    </location>
</feature>
<feature type="modified residue" description="Phosphothreonine" evidence="20 24 26 27">
    <location>
        <position position="2054"/>
    </location>
</feature>
<feature type="modified residue" description="Phosphoserine" evidence="26">
    <location>
        <position position="2056"/>
    </location>
</feature>
<feature type="modified residue" description="Phosphoserine" evidence="24 26">
    <location>
        <position position="2073"/>
    </location>
</feature>
<feature type="modified residue" description="Phosphoserine" evidence="17 20 23 24 26 27">
    <location>
        <position position="2083"/>
    </location>
</feature>
<feature type="modified residue" description="Phosphoserine" evidence="26 27">
    <location>
        <position position="2271"/>
    </location>
</feature>
<feature type="modified residue" description="Phosphoserine" evidence="26">
    <location>
        <position position="2291"/>
    </location>
</feature>
<feature type="splice variant" id="VSP_036029" description="In isoform 5." evidence="13">
    <original>T</original>
    <variation>TPVSSVRPQGRSGRNDGLLALSS</variation>
    <location>
        <position position="2231"/>
    </location>
</feature>
<feature type="splice variant" id="VSP_015252" description="In isoform 2." evidence="16">
    <location>
        <begin position="2265"/>
        <end position="2309"/>
    </location>
</feature>
<feature type="splice variant" id="VSP_034370" description="In isoform 4." evidence="14">
    <location>
        <begin position="2265"/>
        <end position="2289"/>
    </location>
</feature>
<feature type="splice variant" id="VSP_015253" description="In isoform 3." evidence="13">
    <location>
        <begin position="2290"/>
        <end position="2309"/>
    </location>
</feature>
<feature type="sequence variant" id="VAR_023332" description="In dbSNP:rs3812594.">
    <original>R</original>
    <variation>C</variation>
    <location>
        <position position="1039"/>
    </location>
</feature>
<feature type="sequence conflict" description="In Ref. 6; AAH28183." evidence="16" ref="6">
    <original>Y</original>
    <variation>A</variation>
    <location>
        <position position="1277"/>
    </location>
</feature>
<feature type="sequence conflict" description="In Ref. 6; AAH28183." evidence="16" ref="6">
    <original>S</original>
    <variation>P</variation>
    <location>
        <position position="2279"/>
    </location>
</feature>
<dbReference type="EMBL" id="AB002308">
    <property type="protein sequence ID" value="BAA20769.4"/>
    <property type="status" value="ALT_INIT"/>
    <property type="molecule type" value="mRNA"/>
</dbReference>
<dbReference type="EMBL" id="AL592301">
    <property type="status" value="NOT_ANNOTATED_CDS"/>
    <property type="molecule type" value="Genomic_DNA"/>
</dbReference>
<dbReference type="EMBL" id="DQ903855">
    <property type="protein sequence ID" value="ABI78944.1"/>
    <property type="molecule type" value="mRNA"/>
</dbReference>
<dbReference type="EMBL" id="BC008332">
    <property type="protein sequence ID" value="AAH08332.1"/>
    <property type="molecule type" value="mRNA"/>
</dbReference>
<dbReference type="EMBL" id="BC028183">
    <property type="protein sequence ID" value="AAH28183.1"/>
    <property type="molecule type" value="mRNA"/>
</dbReference>
<dbReference type="EMBL" id="BC098454">
    <property type="protein sequence ID" value="AAH98454.1"/>
    <property type="molecule type" value="mRNA"/>
</dbReference>
<dbReference type="CCDS" id="CCDS55351.1">
    <molecule id="O15027-1"/>
</dbReference>
<dbReference type="RefSeq" id="NP_001263347.1">
    <property type="nucleotide sequence ID" value="NM_001276418.1"/>
</dbReference>
<dbReference type="RefSeq" id="NP_055681.1">
    <molecule id="O15027-1"/>
    <property type="nucleotide sequence ID" value="NM_014866.2"/>
</dbReference>
<dbReference type="RefSeq" id="XP_005266191.1">
    <molecule id="O15027-5"/>
    <property type="nucleotide sequence ID" value="XM_005266134.3"/>
</dbReference>
<dbReference type="RefSeq" id="XP_011517548.1">
    <property type="nucleotide sequence ID" value="XM_011519246.2"/>
</dbReference>
<dbReference type="RefSeq" id="XP_011517549.1">
    <molecule id="O15027-5"/>
    <property type="nucleotide sequence ID" value="XM_011519247.3"/>
</dbReference>
<dbReference type="RefSeq" id="XP_011517550.1">
    <property type="nucleotide sequence ID" value="XM_011519248.2"/>
</dbReference>
<dbReference type="RefSeq" id="XP_011517554.1">
    <molecule id="O15027-1"/>
    <property type="nucleotide sequence ID" value="XM_011519252.2"/>
</dbReference>
<dbReference type="RefSeq" id="XP_011517557.1">
    <property type="nucleotide sequence ID" value="XM_011519255.2"/>
</dbReference>
<dbReference type="RefSeq" id="XP_011517559.1">
    <molecule id="O15027-4"/>
    <property type="nucleotide sequence ID" value="XM_011519257.2"/>
</dbReference>
<dbReference type="RefSeq" id="XP_011517561.1">
    <molecule id="O15027-2"/>
    <property type="nucleotide sequence ID" value="XM_011519259.3"/>
</dbReference>
<dbReference type="RefSeq" id="XP_011517562.1">
    <molecule id="O15027-5"/>
    <property type="nucleotide sequence ID" value="XM_011519260.3"/>
</dbReference>
<dbReference type="RefSeq" id="XP_047280185.1">
    <molecule id="O15027-1"/>
    <property type="nucleotide sequence ID" value="XM_047424229.1"/>
</dbReference>
<dbReference type="RefSeq" id="XP_047280189.1">
    <molecule id="O15027-3"/>
    <property type="nucleotide sequence ID" value="XM_047424233.1"/>
</dbReference>
<dbReference type="RefSeq" id="XP_047280191.1">
    <molecule id="O15027-4"/>
    <property type="nucleotide sequence ID" value="XM_047424235.1"/>
</dbReference>
<dbReference type="RefSeq" id="XP_047280195.1">
    <molecule id="O15027-2"/>
    <property type="nucleotide sequence ID" value="XM_047424239.1"/>
</dbReference>
<dbReference type="RefSeq" id="XP_054220358.1">
    <molecule id="O15027-5"/>
    <property type="nucleotide sequence ID" value="XM_054364383.1"/>
</dbReference>
<dbReference type="RefSeq" id="XP_054220364.1">
    <molecule id="O15027-5"/>
    <property type="nucleotide sequence ID" value="XM_054364389.1"/>
</dbReference>
<dbReference type="RefSeq" id="XP_054220366.1">
    <molecule id="O15027-1"/>
    <property type="nucleotide sequence ID" value="XM_054364391.1"/>
</dbReference>
<dbReference type="RefSeq" id="XP_054220373.1">
    <molecule id="O15027-4"/>
    <property type="nucleotide sequence ID" value="XM_054364398.1"/>
</dbReference>
<dbReference type="RefSeq" id="XP_054220376.1">
    <molecule id="O15027-2"/>
    <property type="nucleotide sequence ID" value="XM_054364401.1"/>
</dbReference>
<dbReference type="BioGRID" id="115247">
    <property type="interactions" value="466"/>
</dbReference>
<dbReference type="CORUM" id="O15027"/>
<dbReference type="DIP" id="DIP-27588N"/>
<dbReference type="FunCoup" id="O15027">
    <property type="interactions" value="3269"/>
</dbReference>
<dbReference type="IntAct" id="O15027">
    <property type="interactions" value="280"/>
</dbReference>
<dbReference type="MINT" id="O15027"/>
<dbReference type="STRING" id="9606.ENSP00000325827"/>
<dbReference type="ChEMBL" id="CHEMBL4295654"/>
<dbReference type="GlyCosmos" id="O15027">
    <property type="glycosylation" value="5 sites, 1 glycan"/>
</dbReference>
<dbReference type="GlyGen" id="O15027">
    <property type="glycosylation" value="19 sites, 1 O-linked glycan (15 sites)"/>
</dbReference>
<dbReference type="iPTMnet" id="O15027"/>
<dbReference type="PhosphoSitePlus" id="O15027"/>
<dbReference type="SwissPalm" id="O15027"/>
<dbReference type="BioMuta" id="SEC16A"/>
<dbReference type="jPOST" id="O15027"/>
<dbReference type="MassIVE" id="O15027"/>
<dbReference type="PaxDb" id="9606-ENSP00000325827"/>
<dbReference type="PeptideAtlas" id="O15027"/>
<dbReference type="ProteomicsDB" id="48383">
    <molecule id="O15027-1"/>
</dbReference>
<dbReference type="ProteomicsDB" id="48384">
    <molecule id="O15027-2"/>
</dbReference>
<dbReference type="ProteomicsDB" id="48385">
    <molecule id="O15027-3"/>
</dbReference>
<dbReference type="ProteomicsDB" id="48386">
    <molecule id="O15027-4"/>
</dbReference>
<dbReference type="ProteomicsDB" id="48387">
    <molecule id="O15027-5"/>
</dbReference>
<dbReference type="Pumba" id="O15027"/>
<dbReference type="Antibodypedia" id="1693">
    <property type="antibodies" value="52 antibodies from 19 providers"/>
</dbReference>
<dbReference type="DNASU" id="9919"/>
<dbReference type="Ensembl" id="ENST00000313050.11">
    <molecule id="O15027-1"/>
    <property type="protein sequence ID" value="ENSP00000325827.7"/>
    <property type="gene ID" value="ENSG00000148396.19"/>
</dbReference>
<dbReference type="Ensembl" id="ENST00000684901.1">
    <molecule id="O15027-1"/>
    <property type="protein sequence ID" value="ENSP00000508822.1"/>
    <property type="gene ID" value="ENSG00000148396.19"/>
</dbReference>
<dbReference type="GeneID" id="9919"/>
<dbReference type="KEGG" id="hsa:9919"/>
<dbReference type="MANE-Select" id="ENST00000684901.1">
    <property type="protein sequence ID" value="ENSP00000508822.1"/>
    <property type="RefSeq nucleotide sequence ID" value="NM_014866.2"/>
    <property type="RefSeq protein sequence ID" value="NP_055681.1"/>
</dbReference>
<dbReference type="UCSC" id="uc064xch.1">
    <molecule id="O15027-1"/>
    <property type="organism name" value="human"/>
</dbReference>
<dbReference type="AGR" id="HGNC:29006"/>
<dbReference type="CTD" id="9919"/>
<dbReference type="DisGeNET" id="9919"/>
<dbReference type="GeneCards" id="SEC16A"/>
<dbReference type="HGNC" id="HGNC:29006">
    <property type="gene designation" value="SEC16A"/>
</dbReference>
<dbReference type="HPA" id="ENSG00000148396">
    <property type="expression patterns" value="Low tissue specificity"/>
</dbReference>
<dbReference type="MIM" id="612854">
    <property type="type" value="gene"/>
</dbReference>
<dbReference type="neXtProt" id="NX_O15027"/>
<dbReference type="OpenTargets" id="ENSG00000148396"/>
<dbReference type="PharmGKB" id="PA162402611"/>
<dbReference type="VEuPathDB" id="HostDB:ENSG00000148396"/>
<dbReference type="eggNOG" id="KOG1913">
    <property type="taxonomic scope" value="Eukaryota"/>
</dbReference>
<dbReference type="GeneTree" id="ENSGT00940000159324"/>
<dbReference type="HOGENOM" id="CLU_001465_0_0_1"/>
<dbReference type="InParanoid" id="O15027"/>
<dbReference type="OMA" id="YKSPYDL"/>
<dbReference type="OrthoDB" id="8918678at2759"/>
<dbReference type="PAN-GO" id="O15027">
    <property type="GO annotations" value="4 GO annotations based on evolutionary models"/>
</dbReference>
<dbReference type="PhylomeDB" id="O15027"/>
<dbReference type="TreeFam" id="TF316276"/>
<dbReference type="PathwayCommons" id="O15027"/>
<dbReference type="Reactome" id="R-HSA-204005">
    <property type="pathway name" value="COPII-mediated vesicle transport"/>
</dbReference>
<dbReference type="SignaLink" id="O15027"/>
<dbReference type="SIGNOR" id="O15027"/>
<dbReference type="BioGRID-ORCS" id="9919">
    <property type="hits" value="438 hits in 1123 CRISPR screens"/>
</dbReference>
<dbReference type="CD-CODE" id="1EF72FBA">
    <property type="entry name" value="ERES"/>
</dbReference>
<dbReference type="ChiTaRS" id="SEC16A">
    <property type="organism name" value="human"/>
</dbReference>
<dbReference type="GeneWiki" id="SEC16A"/>
<dbReference type="GenomeRNAi" id="9919"/>
<dbReference type="Pharos" id="O15027">
    <property type="development level" value="Tbio"/>
</dbReference>
<dbReference type="PRO" id="PR:O15027"/>
<dbReference type="Proteomes" id="UP000005640">
    <property type="component" value="Chromosome 9"/>
</dbReference>
<dbReference type="RNAct" id="O15027">
    <property type="molecule type" value="protein"/>
</dbReference>
<dbReference type="Bgee" id="ENSG00000148396">
    <property type="expression patterns" value="Expressed in endometrium epithelium and 205 other cell types or tissues"/>
</dbReference>
<dbReference type="ExpressionAtlas" id="O15027">
    <property type="expression patterns" value="baseline and differential"/>
</dbReference>
<dbReference type="GO" id="GO:0005829">
    <property type="term" value="C:cytosol"/>
    <property type="evidence" value="ECO:0000314"/>
    <property type="project" value="UniProtKB"/>
</dbReference>
<dbReference type="GO" id="GO:0070971">
    <property type="term" value="C:endoplasmic reticulum exit site"/>
    <property type="evidence" value="ECO:0000314"/>
    <property type="project" value="UniProtKB"/>
</dbReference>
<dbReference type="GO" id="GO:0005789">
    <property type="term" value="C:endoplasmic reticulum membrane"/>
    <property type="evidence" value="ECO:0000314"/>
    <property type="project" value="UniProtKB"/>
</dbReference>
<dbReference type="GO" id="GO:0012507">
    <property type="term" value="C:ER to Golgi transport vesicle membrane"/>
    <property type="evidence" value="ECO:0000318"/>
    <property type="project" value="GO_Central"/>
</dbReference>
<dbReference type="GO" id="GO:0000139">
    <property type="term" value="C:Golgi membrane"/>
    <property type="evidence" value="ECO:0007669"/>
    <property type="project" value="UniProtKB-SubCell"/>
</dbReference>
<dbReference type="GO" id="GO:0031090">
    <property type="term" value="C:organelle membrane"/>
    <property type="evidence" value="ECO:0000314"/>
    <property type="project" value="UniProtKB"/>
</dbReference>
<dbReference type="GO" id="GO:0048471">
    <property type="term" value="C:perinuclear region of cytoplasm"/>
    <property type="evidence" value="ECO:0000250"/>
    <property type="project" value="UniProtKB"/>
</dbReference>
<dbReference type="GO" id="GO:0007029">
    <property type="term" value="P:endoplasmic reticulum organization"/>
    <property type="evidence" value="ECO:0000314"/>
    <property type="project" value="UniProtKB"/>
</dbReference>
<dbReference type="GO" id="GO:0006888">
    <property type="term" value="P:endoplasmic reticulum to Golgi vesicle-mediated transport"/>
    <property type="evidence" value="ECO:0000315"/>
    <property type="project" value="UniProtKB"/>
</dbReference>
<dbReference type="GO" id="GO:0007030">
    <property type="term" value="P:Golgi organization"/>
    <property type="evidence" value="ECO:0000318"/>
    <property type="project" value="GO_Central"/>
</dbReference>
<dbReference type="GO" id="GO:0006893">
    <property type="term" value="P:Golgi to plasma membrane transport"/>
    <property type="evidence" value="ECO:0000315"/>
    <property type="project" value="UniProtKB"/>
</dbReference>
<dbReference type="GO" id="GO:0032527">
    <property type="term" value="P:protein exit from endoplasmic reticulum"/>
    <property type="evidence" value="ECO:0000250"/>
    <property type="project" value="UniProtKB"/>
</dbReference>
<dbReference type="GO" id="GO:0070973">
    <property type="term" value="P:protein localization to endoplasmic reticulum exit site"/>
    <property type="evidence" value="ECO:0000315"/>
    <property type="project" value="UniProtKB"/>
</dbReference>
<dbReference type="GO" id="GO:0072659">
    <property type="term" value="P:protein localization to plasma membrane"/>
    <property type="evidence" value="ECO:0000250"/>
    <property type="project" value="UniProtKB"/>
</dbReference>
<dbReference type="GO" id="GO:0050821">
    <property type="term" value="P:protein stabilization"/>
    <property type="evidence" value="ECO:0000315"/>
    <property type="project" value="UniProtKB"/>
</dbReference>
<dbReference type="GO" id="GO:0003400">
    <property type="term" value="P:regulation of COPII vesicle coating"/>
    <property type="evidence" value="ECO:0000315"/>
    <property type="project" value="UniProtKB"/>
</dbReference>
<dbReference type="GO" id="GO:0034976">
    <property type="term" value="P:response to endoplasmic reticulum stress"/>
    <property type="evidence" value="ECO:0000314"/>
    <property type="project" value="UniProtKB"/>
</dbReference>
<dbReference type="GO" id="GO:0021762">
    <property type="term" value="P:substantia nigra development"/>
    <property type="evidence" value="ECO:0007007"/>
    <property type="project" value="UniProtKB"/>
</dbReference>
<dbReference type="CDD" id="cd09233">
    <property type="entry name" value="ACE1-Sec16-like"/>
    <property type="match status" value="1"/>
</dbReference>
<dbReference type="FunFam" id="1.25.40.1030:FF:000002">
    <property type="entry name" value="Protein transport protein sec16"/>
    <property type="match status" value="1"/>
</dbReference>
<dbReference type="Gene3D" id="1.25.40.1030">
    <property type="match status" value="1"/>
</dbReference>
<dbReference type="InterPro" id="IPR024340">
    <property type="entry name" value="Sec16_CCD"/>
</dbReference>
<dbReference type="InterPro" id="IPR024298">
    <property type="entry name" value="Sec16_Sec23-bd"/>
</dbReference>
<dbReference type="PANTHER" id="PTHR13402:SF13">
    <property type="entry name" value="PROTEIN TRANSPORT PROTEIN SEC16A"/>
    <property type="match status" value="1"/>
</dbReference>
<dbReference type="PANTHER" id="PTHR13402">
    <property type="entry name" value="RGPR-RELATED"/>
    <property type="match status" value="1"/>
</dbReference>
<dbReference type="Pfam" id="PF12932">
    <property type="entry name" value="Sec16"/>
    <property type="match status" value="1"/>
</dbReference>
<dbReference type="Pfam" id="PF12931">
    <property type="entry name" value="TPR_Sec16"/>
    <property type="match status" value="1"/>
</dbReference>
<proteinExistence type="evidence at protein level"/>
<keyword id="KW-0025">Alternative splicing</keyword>
<keyword id="KW-0963">Cytoplasm</keyword>
<keyword id="KW-0256">Endoplasmic reticulum</keyword>
<keyword id="KW-0931">ER-Golgi transport</keyword>
<keyword id="KW-0333">Golgi apparatus</keyword>
<keyword id="KW-0472">Membrane</keyword>
<keyword id="KW-0492">Microsome</keyword>
<keyword id="KW-0597">Phosphoprotein</keyword>
<keyword id="KW-0653">Protein transport</keyword>
<keyword id="KW-1267">Proteomics identification</keyword>
<keyword id="KW-1185">Reference proteome</keyword>
<keyword id="KW-0813">Transport</keyword>